<dbReference type="EMBL" id="CP000251">
    <property type="protein sequence ID" value="ABC80435.1"/>
    <property type="molecule type" value="Genomic_DNA"/>
</dbReference>
<dbReference type="RefSeq" id="WP_011419718.1">
    <property type="nucleotide sequence ID" value="NC_007760.1"/>
</dbReference>
<dbReference type="SMR" id="Q2INP9"/>
<dbReference type="STRING" id="290397.Adeh_0659"/>
<dbReference type="KEGG" id="ade:Adeh_0659"/>
<dbReference type="eggNOG" id="COG0823">
    <property type="taxonomic scope" value="Bacteria"/>
</dbReference>
<dbReference type="HOGENOM" id="CLU_047123_2_0_7"/>
<dbReference type="OrthoDB" id="9815657at2"/>
<dbReference type="Proteomes" id="UP000001935">
    <property type="component" value="Chromosome"/>
</dbReference>
<dbReference type="GO" id="GO:0042597">
    <property type="term" value="C:periplasmic space"/>
    <property type="evidence" value="ECO:0007669"/>
    <property type="project" value="UniProtKB-SubCell"/>
</dbReference>
<dbReference type="GO" id="GO:0051301">
    <property type="term" value="P:cell division"/>
    <property type="evidence" value="ECO:0007669"/>
    <property type="project" value="UniProtKB-KW"/>
</dbReference>
<dbReference type="GO" id="GO:0017038">
    <property type="term" value="P:protein import"/>
    <property type="evidence" value="ECO:0007669"/>
    <property type="project" value="InterPro"/>
</dbReference>
<dbReference type="Gene3D" id="2.120.10.30">
    <property type="entry name" value="TolB, C-terminal domain"/>
    <property type="match status" value="1"/>
</dbReference>
<dbReference type="Gene3D" id="3.40.50.10070">
    <property type="entry name" value="TolB, N-terminal domain"/>
    <property type="match status" value="1"/>
</dbReference>
<dbReference type="HAMAP" id="MF_00671">
    <property type="entry name" value="TolB"/>
    <property type="match status" value="1"/>
</dbReference>
<dbReference type="InterPro" id="IPR011042">
    <property type="entry name" value="6-blade_b-propeller_TolB-like"/>
</dbReference>
<dbReference type="InterPro" id="IPR011659">
    <property type="entry name" value="PD40"/>
</dbReference>
<dbReference type="InterPro" id="IPR014167">
    <property type="entry name" value="Tol-Pal_TolB"/>
</dbReference>
<dbReference type="InterPro" id="IPR007195">
    <property type="entry name" value="TolB_N"/>
</dbReference>
<dbReference type="NCBIfam" id="TIGR02800">
    <property type="entry name" value="propeller_TolB"/>
    <property type="match status" value="1"/>
</dbReference>
<dbReference type="PANTHER" id="PTHR36842:SF1">
    <property type="entry name" value="PROTEIN TOLB"/>
    <property type="match status" value="1"/>
</dbReference>
<dbReference type="PANTHER" id="PTHR36842">
    <property type="entry name" value="PROTEIN TOLB HOMOLOG"/>
    <property type="match status" value="1"/>
</dbReference>
<dbReference type="Pfam" id="PF07676">
    <property type="entry name" value="PD40"/>
    <property type="match status" value="4"/>
</dbReference>
<dbReference type="Pfam" id="PF04052">
    <property type="entry name" value="TolB_N"/>
    <property type="match status" value="1"/>
</dbReference>
<dbReference type="SUPFAM" id="SSF52964">
    <property type="entry name" value="TolB, N-terminal domain"/>
    <property type="match status" value="1"/>
</dbReference>
<dbReference type="SUPFAM" id="SSF69304">
    <property type="entry name" value="Tricorn protease N-terminal domain"/>
    <property type="match status" value="1"/>
</dbReference>
<comment type="function">
    <text evidence="1">Part of the Tol-Pal system, which plays a role in outer membrane invagination during cell division and is important for maintaining outer membrane integrity.</text>
</comment>
<comment type="subunit">
    <text evidence="1">The Tol-Pal system is composed of five core proteins: the inner membrane proteins TolA, TolQ and TolR, the periplasmic protein TolB and the outer membrane protein Pal. They form a network linking the inner and outer membranes and the peptidoglycan layer.</text>
</comment>
<comment type="subcellular location">
    <subcellularLocation>
        <location evidence="1">Periplasm</location>
    </subcellularLocation>
</comment>
<comment type="similarity">
    <text evidence="1">Belongs to the TolB family.</text>
</comment>
<evidence type="ECO:0000255" key="1">
    <source>
        <dbReference type="HAMAP-Rule" id="MF_00671"/>
    </source>
</evidence>
<evidence type="ECO:0000256" key="2">
    <source>
        <dbReference type="SAM" id="MobiDB-lite"/>
    </source>
</evidence>
<feature type="signal peptide" evidence="1">
    <location>
        <begin position="1"/>
        <end position="21"/>
    </location>
</feature>
<feature type="chain" id="PRO_0000259029" description="Tol-Pal system protein TolB" evidence="1">
    <location>
        <begin position="22"/>
        <end position="434"/>
    </location>
</feature>
<feature type="region of interest" description="Disordered" evidence="2">
    <location>
        <begin position="411"/>
        <end position="434"/>
    </location>
</feature>
<keyword id="KW-0131">Cell cycle</keyword>
<keyword id="KW-0132">Cell division</keyword>
<keyword id="KW-0574">Periplasm</keyword>
<keyword id="KW-1185">Reference proteome</keyword>
<keyword id="KW-0732">Signal</keyword>
<name>TOLB_ANADE</name>
<protein>
    <recommendedName>
        <fullName evidence="1">Tol-Pal system protein TolB</fullName>
    </recommendedName>
</protein>
<organism>
    <name type="scientific">Anaeromyxobacter dehalogenans (strain 2CP-C)</name>
    <dbReference type="NCBI Taxonomy" id="290397"/>
    <lineage>
        <taxon>Bacteria</taxon>
        <taxon>Pseudomonadati</taxon>
        <taxon>Myxococcota</taxon>
        <taxon>Myxococcia</taxon>
        <taxon>Myxococcales</taxon>
        <taxon>Cystobacterineae</taxon>
        <taxon>Anaeromyxobacteraceae</taxon>
        <taxon>Anaeromyxobacter</taxon>
    </lineage>
</organism>
<proteinExistence type="inferred from homology"/>
<reference key="1">
    <citation type="submission" date="2006-01" db="EMBL/GenBank/DDBJ databases">
        <title>Complete sequence of Anaeromyxobacter dehalogenans 2CP-C.</title>
        <authorList>
            <person name="Copeland A."/>
            <person name="Lucas S."/>
            <person name="Lapidus A."/>
            <person name="Barry K."/>
            <person name="Detter J.C."/>
            <person name="Glavina T."/>
            <person name="Hammon N."/>
            <person name="Israni S."/>
            <person name="Pitluck S."/>
            <person name="Brettin T."/>
            <person name="Bruce D."/>
            <person name="Han C."/>
            <person name="Tapia R."/>
            <person name="Gilna P."/>
            <person name="Kiss H."/>
            <person name="Schmutz J."/>
            <person name="Larimer F."/>
            <person name="Land M."/>
            <person name="Kyrpides N."/>
            <person name="Anderson I."/>
            <person name="Sanford R.A."/>
            <person name="Ritalahti K.M."/>
            <person name="Thomas H.S."/>
            <person name="Kirby J.R."/>
            <person name="Zhulin I.B."/>
            <person name="Loeffler F.E."/>
            <person name="Richardson P."/>
        </authorList>
    </citation>
    <scope>NUCLEOTIDE SEQUENCE [LARGE SCALE GENOMIC DNA]</scope>
    <source>
        <strain>2CP-C</strain>
    </source>
</reference>
<gene>
    <name evidence="1" type="primary">tolB</name>
    <name type="ordered locus">Adeh_0659</name>
</gene>
<sequence>MIVRRALALAALALAASPALAAPERPTIVVGSPDFRPLPIAVAAFQGEGDAGAAATQTAEVVRADLVLSGLFDVLDPRGFLADPAEGFAAPSIRFARWADVGADGLAKARVRRGPGGLEGELHLYEVRAGREVLVKLLRVDGADARSLAHRMADEIVRYYTREPGIFATRIAAIRRGRGTWELVTQDMDGGNQQVLLSERSILMSPAWRPDGREILVTSYRSGRPELWAYRFSDRAFRPLGRQRNAFGGVYSPDGSRIAFTVSEGNVTDLWVMSADGSGARKLTSDPAIDVSPTWSPDGRRIAFVSDRSGTPQIYVMGADGSGARRLTFQGNYNQTPQWSPRGDLIAFTARDERKVFDVFVVAPDSGAISRITQDQGRTNEEPSWAPNGRLMIFRTDRNGGIQLVVSDARGDRQTPVTSGKTDLAAPAWGPLAP</sequence>
<accession>Q2INP9</accession>